<gene>
    <name evidence="9" type="primary">Ggps1</name>
</gene>
<keyword id="KW-0007">Acetylation</keyword>
<keyword id="KW-0963">Cytoplasm</keyword>
<keyword id="KW-0414">Isoprene biosynthesis</keyword>
<keyword id="KW-0443">Lipid metabolism</keyword>
<keyword id="KW-0460">Magnesium</keyword>
<keyword id="KW-0479">Metal-binding</keyword>
<keyword id="KW-1185">Reference proteome</keyword>
<keyword id="KW-0808">Transferase</keyword>
<proteinExistence type="evidence at protein level"/>
<evidence type="ECO:0000250" key="1"/>
<evidence type="ECO:0000250" key="2">
    <source>
        <dbReference type="UniProtKB" id="O95749"/>
    </source>
</evidence>
<evidence type="ECO:0000250" key="3">
    <source>
        <dbReference type="UniProtKB" id="P14324"/>
    </source>
</evidence>
<evidence type="ECO:0000250" key="4">
    <source>
        <dbReference type="UniProtKB" id="Q12051"/>
    </source>
</evidence>
<evidence type="ECO:0000269" key="5">
    <source>
    </source>
</evidence>
<evidence type="ECO:0000303" key="6">
    <source>
    </source>
</evidence>
<evidence type="ECO:0000305" key="7"/>
<evidence type="ECO:0000305" key="8">
    <source>
    </source>
</evidence>
<evidence type="ECO:0000312" key="9">
    <source>
        <dbReference type="MGI" id="MGI:1341724"/>
    </source>
</evidence>
<name>GGPPS_MOUSE</name>
<protein>
    <recommendedName>
        <fullName evidence="8">Geranylgeranyl pyrophosphate synthase</fullName>
        <shortName>GGPP synthase</shortName>
        <shortName>GGPPSase</shortName>
        <ecNumber evidence="8">2.5.1.-</ecNumber>
    </recommendedName>
    <alternativeName>
        <fullName>(2E,6E)-farnesyl diphosphate synthase</fullName>
    </alternativeName>
    <alternativeName>
        <fullName>Dimethylallyltranstransferase</fullName>
        <ecNumber>2.5.1.1</ecNumber>
    </alternativeName>
    <alternativeName>
        <fullName>Farnesyl diphosphate synthase</fullName>
    </alternativeName>
    <alternativeName>
        <fullName>Farnesyltranstransferase</fullName>
        <ecNumber evidence="8">2.5.1.29</ecNumber>
    </alternativeName>
    <alternativeName>
        <fullName evidence="6">Geranylgeranyl diphosphate synthase</fullName>
    </alternativeName>
    <alternativeName>
        <fullName>Geranyltranstransferase</fullName>
        <ecNumber>2.5.1.10</ecNumber>
    </alternativeName>
</protein>
<accession>Q9WTN0</accession>
<comment type="function">
    <text evidence="2">Catalyzes the trans-addition of the three molecules of isopentenyl diphosphate (IPP) onto dimethylallyl pyrophosphate (DMAPP) to form geranylgeranyl pyrophosphate, an important precursor of carotenoids and geranylated proteins.</text>
</comment>
<comment type="catalytic activity">
    <reaction>
        <text>isopentenyl diphosphate + dimethylallyl diphosphate = (2E)-geranyl diphosphate + diphosphate</text>
        <dbReference type="Rhea" id="RHEA:22408"/>
        <dbReference type="ChEBI" id="CHEBI:33019"/>
        <dbReference type="ChEBI" id="CHEBI:57623"/>
        <dbReference type="ChEBI" id="CHEBI:58057"/>
        <dbReference type="ChEBI" id="CHEBI:128769"/>
        <dbReference type="EC" id="2.5.1.1"/>
    </reaction>
</comment>
<comment type="catalytic activity">
    <reaction>
        <text>isopentenyl diphosphate + (2E)-geranyl diphosphate = (2E,6E)-farnesyl diphosphate + diphosphate</text>
        <dbReference type="Rhea" id="RHEA:19361"/>
        <dbReference type="ChEBI" id="CHEBI:33019"/>
        <dbReference type="ChEBI" id="CHEBI:58057"/>
        <dbReference type="ChEBI" id="CHEBI:128769"/>
        <dbReference type="ChEBI" id="CHEBI:175763"/>
        <dbReference type="EC" id="2.5.1.10"/>
    </reaction>
</comment>
<comment type="catalytic activity">
    <reaction evidence="8">
        <text>isopentenyl diphosphate + (2E,6E)-farnesyl diphosphate = (2E,6E,10E)-geranylgeranyl diphosphate + diphosphate</text>
        <dbReference type="Rhea" id="RHEA:17653"/>
        <dbReference type="ChEBI" id="CHEBI:33019"/>
        <dbReference type="ChEBI" id="CHEBI:58756"/>
        <dbReference type="ChEBI" id="CHEBI:128769"/>
        <dbReference type="ChEBI" id="CHEBI:175763"/>
        <dbReference type="EC" id="2.5.1.29"/>
    </reaction>
    <physiologicalReaction direction="left-to-right" evidence="8">
        <dbReference type="Rhea" id="RHEA:17654"/>
    </physiologicalReaction>
</comment>
<comment type="cofactor">
    <cofactor evidence="1">
        <name>Mg(2+)</name>
        <dbReference type="ChEBI" id="CHEBI:18420"/>
    </cofactor>
    <text evidence="1">Binds 2 Mg(2+) ions per subunit.</text>
</comment>
<comment type="pathway">
    <text>Isoprenoid biosynthesis; farnesyl diphosphate biosynthesis; farnesyl diphosphate from geranyl diphosphate and isopentenyl diphosphate: step 1/1.</text>
</comment>
<comment type="pathway">
    <text>Isoprenoid biosynthesis; geranyl diphosphate biosynthesis; geranyl diphosphate from dimethylallyl diphosphate and isopentenyl diphosphate: step 1/1.</text>
</comment>
<comment type="pathway">
    <text>Isoprenoid biosynthesis; geranylgeranyl diphosphate biosynthesis; geranylgeranyl diphosphate from farnesyl diphosphate and isopentenyl diphosphate: step 1/1.</text>
</comment>
<comment type="subunit">
    <text evidence="1">Homohexamer; trimer of homodimers.</text>
</comment>
<comment type="subcellular location">
    <subcellularLocation>
        <location evidence="7">Cytoplasm</location>
    </subcellularLocation>
    <subcellularLocation>
        <location evidence="2">Cytoplasm</location>
        <location evidence="2">Perinuclear region</location>
    </subcellularLocation>
    <subcellularLocation>
        <location evidence="2">Cytoplasm</location>
        <location evidence="2">Myofibril</location>
        <location evidence="2">Sarcomere</location>
        <location evidence="2">Z line</location>
    </subcellularLocation>
</comment>
<comment type="similarity">
    <text evidence="7">Belongs to the FPP/GGPP synthase family.</text>
</comment>
<organism>
    <name type="scientific">Mus musculus</name>
    <name type="common">Mouse</name>
    <dbReference type="NCBI Taxonomy" id="10090"/>
    <lineage>
        <taxon>Eukaryota</taxon>
        <taxon>Metazoa</taxon>
        <taxon>Chordata</taxon>
        <taxon>Craniata</taxon>
        <taxon>Vertebrata</taxon>
        <taxon>Euteleostomi</taxon>
        <taxon>Mammalia</taxon>
        <taxon>Eutheria</taxon>
        <taxon>Euarchontoglires</taxon>
        <taxon>Glires</taxon>
        <taxon>Rodentia</taxon>
        <taxon>Myomorpha</taxon>
        <taxon>Muroidea</taxon>
        <taxon>Muridae</taxon>
        <taxon>Murinae</taxon>
        <taxon>Mus</taxon>
        <taxon>Mus</taxon>
    </lineage>
</organism>
<reference key="1">
    <citation type="journal article" date="1999" name="Biochim. Biophys. Acta">
        <title>Identification of the GGPS1 genes encoding geranylgeranyl diphosphate synthases from mouse and human.</title>
        <authorList>
            <person name="Kainou T."/>
            <person name="Kawamura K."/>
            <person name="Tanaka K."/>
            <person name="Matsuda H."/>
            <person name="Kawamukai M."/>
        </authorList>
    </citation>
    <scope>NUCLEOTIDE SEQUENCE [MRNA]</scope>
    <scope>CATALYTIC ACTIVITY</scope>
    <source>
        <strain>C57BL/6J</strain>
        <tissue>Lymph node</tissue>
    </source>
</reference>
<reference key="2">
    <citation type="journal article" date="2004" name="Genome Res.">
        <title>The status, quality, and expansion of the NIH full-length cDNA project: the Mammalian Gene Collection (MGC).</title>
        <authorList>
            <consortium name="The MGC Project Team"/>
        </authorList>
    </citation>
    <scope>NUCLEOTIDE SEQUENCE [LARGE SCALE MRNA]</scope>
    <source>
        <tissue>Eye</tissue>
    </source>
</reference>
<reference key="3">
    <citation type="journal article" date="2010" name="Cell">
        <title>A tissue-specific atlas of mouse protein phosphorylation and expression.</title>
        <authorList>
            <person name="Huttlin E.L."/>
            <person name="Jedrychowski M.P."/>
            <person name="Elias J.E."/>
            <person name="Goswami T."/>
            <person name="Rad R."/>
            <person name="Beausoleil S.A."/>
            <person name="Villen J."/>
            <person name="Haas W."/>
            <person name="Sowa M.E."/>
            <person name="Gygi S.P."/>
        </authorList>
    </citation>
    <scope>IDENTIFICATION BY MASS SPECTROMETRY [LARGE SCALE ANALYSIS]</scope>
    <source>
        <tissue>Brain</tissue>
        <tissue>Heart</tissue>
        <tissue>Lung</tissue>
        <tissue>Pancreas</tissue>
        <tissue>Spleen</tissue>
        <tissue>Testis</tissue>
    </source>
</reference>
<reference key="4">
    <citation type="journal article" date="2020" name="Ann. Neurol.">
        <title>GGPS1 Mutations Cause Muscular Dystrophy/Hearing Loss/Ovarian Insufficiency Syndrome.</title>
        <authorList>
            <person name="Foley A.R."/>
            <person name="Zou Y."/>
            <person name="Dunford J.E."/>
            <person name="Rooney J."/>
            <person name="Chandra G."/>
            <person name="Xiong H."/>
            <person name="Straub V."/>
            <person name="Voit T."/>
            <person name="Romero N."/>
            <person name="Donkervoort S."/>
            <person name="Hu Y."/>
            <person name="Markello T."/>
            <person name="Horn A."/>
            <person name="Qebibo L."/>
            <person name="Dastgir J."/>
            <person name="Meilleur K.G."/>
            <person name="Finkel R.S."/>
            <person name="Fan Y."/>
            <person name="Mamchaoui K."/>
            <person name="Duguez S."/>
            <person name="Nelson I."/>
            <person name="Laporte J."/>
            <person name="Santi M."/>
            <person name="Malfatti E."/>
            <person name="Maisonobe T."/>
            <person name="Touraine P."/>
            <person name="Hirano M."/>
            <person name="Hughes I."/>
            <person name="Bushby K."/>
            <person name="Oppermann U."/>
            <person name="Boehm J."/>
            <person name="Jaiswal J.K."/>
            <person name="Stojkovic T."/>
            <person name="Boennemann C.G."/>
        </authorList>
    </citation>
    <scope>MUTAGENESIS OF TYR-259</scope>
</reference>
<dbReference type="EC" id="2.5.1.-" evidence="8"/>
<dbReference type="EC" id="2.5.1.1"/>
<dbReference type="EC" id="2.5.1.29" evidence="8"/>
<dbReference type="EC" id="2.5.1.10"/>
<dbReference type="EMBL" id="AB016044">
    <property type="protein sequence ID" value="BAA76512.1"/>
    <property type="molecule type" value="mRNA"/>
</dbReference>
<dbReference type="EMBL" id="BC069913">
    <property type="protein sequence ID" value="AAH69913.1"/>
    <property type="molecule type" value="mRNA"/>
</dbReference>
<dbReference type="CCDS" id="CCDS26248.1"/>
<dbReference type="RefSeq" id="NP_001318048.1">
    <property type="nucleotide sequence ID" value="NM_001331119.1"/>
</dbReference>
<dbReference type="RefSeq" id="NP_001318105.1">
    <property type="nucleotide sequence ID" value="NM_001331176.1"/>
</dbReference>
<dbReference type="RefSeq" id="NP_001318106.1">
    <property type="nucleotide sequence ID" value="NM_001331177.1"/>
</dbReference>
<dbReference type="RefSeq" id="NP_001318107.1">
    <property type="nucleotide sequence ID" value="NM_001331178.1"/>
</dbReference>
<dbReference type="RefSeq" id="NP_001318109.1">
    <property type="nucleotide sequence ID" value="NM_001331180.1"/>
</dbReference>
<dbReference type="RefSeq" id="NP_034412.1">
    <property type="nucleotide sequence ID" value="NM_010282.3"/>
</dbReference>
<dbReference type="RefSeq" id="XP_006516612.1">
    <property type="nucleotide sequence ID" value="XM_006516549.5"/>
</dbReference>
<dbReference type="RefSeq" id="XP_017170874.1">
    <property type="nucleotide sequence ID" value="XM_017315385.3"/>
</dbReference>
<dbReference type="RefSeq" id="XP_036013742.1">
    <property type="nucleotide sequence ID" value="XM_036157849.1"/>
</dbReference>
<dbReference type="RefSeq" id="XP_036013743.1">
    <property type="nucleotide sequence ID" value="XM_036157850.1"/>
</dbReference>
<dbReference type="SMR" id="Q9WTN0"/>
<dbReference type="BioGRID" id="199910">
    <property type="interactions" value="2"/>
</dbReference>
<dbReference type="FunCoup" id="Q9WTN0">
    <property type="interactions" value="3229"/>
</dbReference>
<dbReference type="STRING" id="10090.ENSMUSP00000126603"/>
<dbReference type="GlyGen" id="Q9WTN0">
    <property type="glycosylation" value="1 site, 1 N-linked glycan (1 site)"/>
</dbReference>
<dbReference type="iPTMnet" id="Q9WTN0"/>
<dbReference type="PhosphoSitePlus" id="Q9WTN0"/>
<dbReference type="PaxDb" id="10090-ENSMUSP00000126603"/>
<dbReference type="ProteomicsDB" id="271214"/>
<dbReference type="Pumba" id="Q9WTN0"/>
<dbReference type="Antibodypedia" id="34695">
    <property type="antibodies" value="445 antibodies from 30 providers"/>
</dbReference>
<dbReference type="DNASU" id="14593"/>
<dbReference type="Ensembl" id="ENSMUST00000170957.3">
    <property type="protein sequence ID" value="ENSMUSP00000126603.2"/>
    <property type="gene ID" value="ENSMUSG00000021302.11"/>
</dbReference>
<dbReference type="GeneID" id="14593"/>
<dbReference type="KEGG" id="mmu:14593"/>
<dbReference type="UCSC" id="uc007pmw.2">
    <property type="organism name" value="mouse"/>
</dbReference>
<dbReference type="AGR" id="MGI:1341724"/>
<dbReference type="CTD" id="9453"/>
<dbReference type="MGI" id="MGI:1341724">
    <property type="gene designation" value="Ggps1"/>
</dbReference>
<dbReference type="VEuPathDB" id="HostDB:ENSMUSG00000021302"/>
<dbReference type="eggNOG" id="KOG0777">
    <property type="taxonomic scope" value="Eukaryota"/>
</dbReference>
<dbReference type="GeneTree" id="ENSGT00940000153498"/>
<dbReference type="HOGENOM" id="CLU_014015_6_0_1"/>
<dbReference type="InParanoid" id="Q9WTN0"/>
<dbReference type="OMA" id="FYSKAFF"/>
<dbReference type="OrthoDB" id="6921389at2759"/>
<dbReference type="PhylomeDB" id="Q9WTN0"/>
<dbReference type="TreeFam" id="TF300101"/>
<dbReference type="BRENDA" id="2.5.1.29">
    <property type="organism ID" value="3474"/>
</dbReference>
<dbReference type="Reactome" id="R-MMU-191273">
    <property type="pathway name" value="Cholesterol biosynthesis"/>
</dbReference>
<dbReference type="UniPathway" id="UPA00259">
    <property type="reaction ID" value="UER00368"/>
</dbReference>
<dbReference type="UniPathway" id="UPA00260">
    <property type="reaction ID" value="UER00369"/>
</dbReference>
<dbReference type="UniPathway" id="UPA00389">
    <property type="reaction ID" value="UER00564"/>
</dbReference>
<dbReference type="BioGRID-ORCS" id="14593">
    <property type="hits" value="32 hits in 79 CRISPR screens"/>
</dbReference>
<dbReference type="ChiTaRS" id="Ggps1">
    <property type="organism name" value="mouse"/>
</dbReference>
<dbReference type="PRO" id="PR:Q9WTN0"/>
<dbReference type="Proteomes" id="UP000000589">
    <property type="component" value="Chromosome 13"/>
</dbReference>
<dbReference type="RNAct" id="Q9WTN0">
    <property type="molecule type" value="protein"/>
</dbReference>
<dbReference type="Bgee" id="ENSMUSG00000021302">
    <property type="expression patterns" value="Expressed in rostral migratory stream and 252 other cell types or tissues"/>
</dbReference>
<dbReference type="ExpressionAtlas" id="Q9WTN0">
    <property type="expression patterns" value="baseline and differential"/>
</dbReference>
<dbReference type="GO" id="GO:0005737">
    <property type="term" value="C:cytoplasm"/>
    <property type="evidence" value="ECO:0000250"/>
    <property type="project" value="UniProtKB"/>
</dbReference>
<dbReference type="GO" id="GO:0005829">
    <property type="term" value="C:cytosol"/>
    <property type="evidence" value="ECO:0007669"/>
    <property type="project" value="Ensembl"/>
</dbReference>
<dbReference type="GO" id="GO:0005654">
    <property type="term" value="C:nucleoplasm"/>
    <property type="evidence" value="ECO:0007669"/>
    <property type="project" value="Ensembl"/>
</dbReference>
<dbReference type="GO" id="GO:0048471">
    <property type="term" value="C:perinuclear region of cytoplasm"/>
    <property type="evidence" value="ECO:0000250"/>
    <property type="project" value="UniProtKB"/>
</dbReference>
<dbReference type="GO" id="GO:0030018">
    <property type="term" value="C:Z disc"/>
    <property type="evidence" value="ECO:0000250"/>
    <property type="project" value="UniProtKB"/>
</dbReference>
<dbReference type="GO" id="GO:0004337">
    <property type="term" value="F:(2E,6E)-farnesyl diphosphate synthase activity"/>
    <property type="evidence" value="ECO:0000314"/>
    <property type="project" value="MGI"/>
</dbReference>
<dbReference type="GO" id="GO:0004161">
    <property type="term" value="F:dimethylallyltranstransferase activity"/>
    <property type="evidence" value="ECO:0007669"/>
    <property type="project" value="UniProtKB-EC"/>
</dbReference>
<dbReference type="GO" id="GO:0004311">
    <property type="term" value="F:geranylgeranyl diphosphate synthase activity"/>
    <property type="evidence" value="ECO:0000250"/>
    <property type="project" value="UniProtKB"/>
</dbReference>
<dbReference type="GO" id="GO:0042802">
    <property type="term" value="F:identical protein binding"/>
    <property type="evidence" value="ECO:0007669"/>
    <property type="project" value="Ensembl"/>
</dbReference>
<dbReference type="GO" id="GO:0046872">
    <property type="term" value="F:metal ion binding"/>
    <property type="evidence" value="ECO:0007669"/>
    <property type="project" value="UniProtKB-KW"/>
</dbReference>
<dbReference type="GO" id="GO:0045337">
    <property type="term" value="P:farnesyl diphosphate biosynthetic process"/>
    <property type="evidence" value="ECO:0007669"/>
    <property type="project" value="UniProtKB-UniPathway"/>
</dbReference>
<dbReference type="GO" id="GO:0033384">
    <property type="term" value="P:geranyl diphosphate biosynthetic process"/>
    <property type="evidence" value="ECO:0007669"/>
    <property type="project" value="UniProtKB-UniPathway"/>
</dbReference>
<dbReference type="GO" id="GO:0033386">
    <property type="term" value="P:geranylgeranyl diphosphate biosynthetic process"/>
    <property type="evidence" value="ECO:0007669"/>
    <property type="project" value="UniProtKB-UniPathway"/>
</dbReference>
<dbReference type="GO" id="GO:0006720">
    <property type="term" value="P:isoprenoid metabolic process"/>
    <property type="evidence" value="ECO:0000250"/>
    <property type="project" value="UniProtKB"/>
</dbReference>
<dbReference type="CDD" id="cd00685">
    <property type="entry name" value="Trans_IPPS_HT"/>
    <property type="match status" value="1"/>
</dbReference>
<dbReference type="FunFam" id="1.10.600.10:FF:000009">
    <property type="entry name" value="Geranylgeranyl pyrophosphate synthase"/>
    <property type="match status" value="1"/>
</dbReference>
<dbReference type="Gene3D" id="1.10.600.10">
    <property type="entry name" value="Farnesyl Diphosphate Synthase"/>
    <property type="match status" value="1"/>
</dbReference>
<dbReference type="InterPro" id="IPR008949">
    <property type="entry name" value="Isoprenoid_synthase_dom_sf"/>
</dbReference>
<dbReference type="InterPro" id="IPR000092">
    <property type="entry name" value="Polyprenyl_synt"/>
</dbReference>
<dbReference type="InterPro" id="IPR033749">
    <property type="entry name" value="Polyprenyl_synt_CS"/>
</dbReference>
<dbReference type="PANTHER" id="PTHR12001">
    <property type="entry name" value="GERANYLGERANYL PYROPHOSPHATE SYNTHASE"/>
    <property type="match status" value="1"/>
</dbReference>
<dbReference type="PANTHER" id="PTHR12001:SF44">
    <property type="entry name" value="GERANYLGERANYL PYROPHOSPHATE SYNTHASE"/>
    <property type="match status" value="1"/>
</dbReference>
<dbReference type="Pfam" id="PF00348">
    <property type="entry name" value="polyprenyl_synt"/>
    <property type="match status" value="1"/>
</dbReference>
<dbReference type="SFLD" id="SFLDS00005">
    <property type="entry name" value="Isoprenoid_Synthase_Type_I"/>
    <property type="match status" value="1"/>
</dbReference>
<dbReference type="SFLD" id="SFLDG01017">
    <property type="entry name" value="Polyprenyl_Transferase_Like"/>
    <property type="match status" value="1"/>
</dbReference>
<dbReference type="SUPFAM" id="SSF48576">
    <property type="entry name" value="Terpenoid synthases"/>
    <property type="match status" value="1"/>
</dbReference>
<dbReference type="PROSITE" id="PS00723">
    <property type="entry name" value="POLYPRENYL_SYNTHASE_1"/>
    <property type="match status" value="1"/>
</dbReference>
<dbReference type="PROSITE" id="PS00444">
    <property type="entry name" value="POLYPRENYL_SYNTHASE_2"/>
    <property type="match status" value="1"/>
</dbReference>
<feature type="chain" id="PRO_0000123963" description="Geranylgeranyl pyrophosphate synthase">
    <location>
        <begin position="1"/>
        <end position="300"/>
    </location>
</feature>
<feature type="binding site" evidence="3">
    <location>
        <position position="25"/>
    </location>
    <ligand>
        <name>isopentenyl diphosphate</name>
        <dbReference type="ChEBI" id="CHEBI:128769"/>
    </ligand>
</feature>
<feature type="binding site" evidence="3">
    <location>
        <position position="28"/>
    </location>
    <ligand>
        <name>isopentenyl diphosphate</name>
        <dbReference type="ChEBI" id="CHEBI:128769"/>
    </ligand>
</feature>
<feature type="binding site" evidence="4">
    <location>
        <position position="57"/>
    </location>
    <ligand>
        <name>isopentenyl diphosphate</name>
        <dbReference type="ChEBI" id="CHEBI:128769"/>
    </ligand>
</feature>
<feature type="binding site" evidence="3">
    <location>
        <position position="64"/>
    </location>
    <ligand>
        <name>Mg(2+)</name>
        <dbReference type="ChEBI" id="CHEBI:18420"/>
        <label>1</label>
    </ligand>
</feature>
<feature type="binding site" evidence="3">
    <location>
        <position position="64"/>
    </location>
    <ligand>
        <name>Mg(2+)</name>
        <dbReference type="ChEBI" id="CHEBI:18420"/>
        <label>2</label>
    </ligand>
</feature>
<feature type="binding site" evidence="3">
    <location>
        <position position="68"/>
    </location>
    <ligand>
        <name>Mg(2+)</name>
        <dbReference type="ChEBI" id="CHEBI:18420"/>
        <label>1</label>
    </ligand>
</feature>
<feature type="binding site" evidence="3">
    <location>
        <position position="68"/>
    </location>
    <ligand>
        <name>Mg(2+)</name>
        <dbReference type="ChEBI" id="CHEBI:18420"/>
        <label>2</label>
    </ligand>
</feature>
<feature type="binding site" evidence="1">
    <location>
        <position position="73"/>
    </location>
    <ligand>
        <name>dimethylallyl diphosphate</name>
        <dbReference type="ChEBI" id="CHEBI:57623"/>
    </ligand>
</feature>
<feature type="binding site" evidence="3">
    <location>
        <position position="74"/>
    </location>
    <ligand>
        <name>isopentenyl diphosphate</name>
        <dbReference type="ChEBI" id="CHEBI:128769"/>
    </ligand>
</feature>
<feature type="binding site" evidence="1">
    <location>
        <position position="151"/>
    </location>
    <ligand>
        <name>dimethylallyl diphosphate</name>
        <dbReference type="ChEBI" id="CHEBI:57623"/>
    </ligand>
</feature>
<feature type="binding site" evidence="1">
    <location>
        <position position="152"/>
    </location>
    <ligand>
        <name>dimethylallyl diphosphate</name>
        <dbReference type="ChEBI" id="CHEBI:57623"/>
    </ligand>
</feature>
<feature type="binding site" evidence="1">
    <location>
        <position position="185"/>
    </location>
    <ligand>
        <name>dimethylallyl diphosphate</name>
        <dbReference type="ChEBI" id="CHEBI:57623"/>
    </ligand>
</feature>
<feature type="binding site" evidence="1">
    <location>
        <position position="202"/>
    </location>
    <ligand>
        <name>dimethylallyl diphosphate</name>
        <dbReference type="ChEBI" id="CHEBI:57623"/>
    </ligand>
</feature>
<feature type="binding site" evidence="1">
    <location>
        <position position="212"/>
    </location>
    <ligand>
        <name>dimethylallyl diphosphate</name>
        <dbReference type="ChEBI" id="CHEBI:57623"/>
    </ligand>
</feature>
<feature type="modified residue" description="N-acetylmethionine" evidence="2">
    <location>
        <position position="1"/>
    </location>
</feature>
<feature type="mutagenesis site" description="Results in prenatal animals lethality." evidence="5">
    <original>Y</original>
    <variation>C</variation>
    <location>
        <position position="259"/>
    </location>
</feature>
<sequence>MEKTKEKAERILLEPYRYLLQLPGKQVRSKLSQAFNHWLKVPEDKLQIIIEVTEMLHNASLLIDDIEDSSKLRRGFPVAHSIYGVPSVINSANYVYFLGLEKVLTLDHPDAVKLFTRQLLELHQGQGLDIYWRDTYTCPTEEEYKAMVLQKTGGLFGLAVGLMQLFSDYKEDLKPLLDTLGLFFQIRDDYANLHSKEYSENKSFCEDLTEGKFSFPTIHAIWSRPESTQVQNILRQRTENIDIKKYCVQYLEDVGSFAYTRHTLRELEAKAYKQIEACGGNPSLVALVKHLSKMFTEENK</sequence>